<evidence type="ECO:0000269" key="1">
    <source>
    </source>
</evidence>
<evidence type="ECO:0000269" key="2">
    <source>
    </source>
</evidence>
<evidence type="ECO:0000303" key="3">
    <source>
    </source>
</evidence>
<evidence type="ECO:0000305" key="4"/>
<evidence type="ECO:0000305" key="5">
    <source>
    </source>
</evidence>
<evidence type="ECO:0000312" key="6">
    <source>
        <dbReference type="EMBL" id="AAU27631.1"/>
    </source>
</evidence>
<evidence type="ECO:0007744" key="7">
    <source>
        <dbReference type="PDB" id="6SZ9"/>
    </source>
</evidence>
<protein>
    <recommendedName>
        <fullName evidence="4">Type 4 apparatus protein DotZ</fullName>
    </recommendedName>
</protein>
<proteinExistence type="evidence at protein level"/>
<name>DOTZ_LEGPH</name>
<accession>Q5ZV91</accession>
<organism>
    <name type="scientific">Legionella pneumophila subsp. pneumophila (strain Philadelphia 1 / ATCC 33152 / DSM 7513)</name>
    <dbReference type="NCBI Taxonomy" id="272624"/>
    <lineage>
        <taxon>Bacteria</taxon>
        <taxon>Pseudomonadati</taxon>
        <taxon>Pseudomonadota</taxon>
        <taxon>Gammaproteobacteria</taxon>
        <taxon>Legionellales</taxon>
        <taxon>Legionellaceae</taxon>
        <taxon>Legionella</taxon>
    </lineage>
</organism>
<comment type="function">
    <text evidence="1 2">Component of the Dot/Icm type IVB secretion system (T4BSS), which is used to inject bacterial effector proteins into eukaryotic host cells (PubMed:32513920). Part of a subcomplex which recruits effector proteins and delivers them to the core transmembrane subcomplex (PubMed:32513920). DotY and DotZ play a role in effector translocation, but are not essential and do not influence the stability of the subcomplex main components (PubMed:34816517). The DotY/DotZ main function is to optimize secretion by modulating the delivery trajectory of the IcmSW module and the localization of the machinery to the poles (PubMed:34816517).</text>
</comment>
<comment type="subunit">
    <text evidence="1 2">The T4BSS is a complex nanomachine composed of several subcomplexes. This subunit is part of the Type IV Coupling Complex (T4CC), a subcomplex composed of the DotLMNYZ core and the IcmSW-LvgA adapter subunits, linked by the C-terminal tail of DotL (PubMed:32513920). Six DotLMNYZ hetero-pentameric units may assemble into a hexameric nanomachine, forming an inner membrane channel for effectors to pass through (PubMed:32513920). Makes significant contact with DotN and DotY, but engages weakly with DotM and DotL (PubMed:32513920, PubMed:34816517). DotY and DotZ are co-dependent for the assembly into the T4CC (PubMed:34816517).</text>
</comment>
<comment type="subcellular location">
    <subcellularLocation>
        <location evidence="5">Cytoplasm</location>
    </subcellularLocation>
    <text evidence="2">Localizes to the poles of the cell. Localization depends on the fully assembled T4CC subcomplex.</text>
</comment>
<comment type="disruption phenotype">
    <text evidence="1 2">Deletion of the gene leads to a reduced intracellular growth in the protozoa A.castellanii and decreased levels of effector translocation (PubMed:32513920). Deletion of dotZ results in the absence of both DotY and DotZ proteins in the coupling complex (PubMed:34816517). Deletion mutant shows significantly reduced DotL polar localization (PubMed:34816517).</text>
</comment>
<sequence length="294" mass="33846">MDEIKKDDELSQWLSTYGTITAERILGRYNISLPQDEILEAINIPSSFYRHLLQIPLKNVLNGIVIQQASDYHVYAQKLLIDYLLSGESSKEPDSQGAGTRESLEDERQRLVQLGDEFHKLELEQDNLIASSQASLMKISIDWNTKLETTLSKLNSLYKNTNSKIKKNAIRKALIKAFIHCDLVKDQSQKNKYQLIDKLNQTLAVSVGAELKESILTNLSELFQILEALNTKLDEFTDRTNHLSQQAKSFRTQFYEVILRIIELIKLLPEYKIDPAQDAINREPLYFDRTIGER</sequence>
<feature type="chain" id="PRO_0000455594" description="Type 4 apparatus protein DotZ">
    <location>
        <begin position="1"/>
        <end position="294"/>
    </location>
</feature>
<feature type="mutagenesis site" description="Decreases intracellular growth in A.castellanii." evidence="1">
    <location>
        <begin position="283"/>
        <end position="294"/>
    </location>
</feature>
<dbReference type="EMBL" id="AE017354">
    <property type="protein sequence ID" value="AAU27631.1"/>
    <property type="molecule type" value="Genomic_DNA"/>
</dbReference>
<dbReference type="RefSeq" id="WP_010947278.1">
    <property type="nucleotide sequence ID" value="NC_002942.5"/>
</dbReference>
<dbReference type="RefSeq" id="YP_095578.1">
    <property type="nucleotide sequence ID" value="NC_002942.5"/>
</dbReference>
<dbReference type="PDB" id="6SZ9">
    <property type="method" value="EM"/>
    <property type="resolution" value="3.70 A"/>
    <property type="chains" value="D=1-294"/>
</dbReference>
<dbReference type="PDB" id="7OVB">
    <property type="method" value="EM"/>
    <property type="resolution" value="3.61 A"/>
    <property type="chains" value="D=1-294"/>
</dbReference>
<dbReference type="PDBsum" id="6SZ9"/>
<dbReference type="PDBsum" id="7OVB"/>
<dbReference type="EMDB" id="EMD-10350"/>
<dbReference type="EMDB" id="EMD-13083"/>
<dbReference type="SMR" id="Q5ZV91"/>
<dbReference type="STRING" id="272624.lpg1549"/>
<dbReference type="PaxDb" id="272624-lpg1549"/>
<dbReference type="GeneID" id="57035538"/>
<dbReference type="KEGG" id="lpn:lpg1549"/>
<dbReference type="PATRIC" id="fig|272624.6.peg.1622"/>
<dbReference type="eggNOG" id="ENOG5030SXU">
    <property type="taxonomic scope" value="Bacteria"/>
</dbReference>
<dbReference type="HOGENOM" id="CLU_945923_0_0_6"/>
<dbReference type="OrthoDB" id="5649041at2"/>
<dbReference type="Proteomes" id="UP000000609">
    <property type="component" value="Chromosome"/>
</dbReference>
<dbReference type="GO" id="GO:0005737">
    <property type="term" value="C:cytoplasm"/>
    <property type="evidence" value="ECO:0007669"/>
    <property type="project" value="UniProtKB-SubCell"/>
</dbReference>
<dbReference type="GO" id="GO:0015031">
    <property type="term" value="P:protein transport"/>
    <property type="evidence" value="ECO:0007669"/>
    <property type="project" value="UniProtKB-KW"/>
</dbReference>
<dbReference type="CDD" id="cd22644">
    <property type="entry name" value="DotZ"/>
    <property type="match status" value="1"/>
</dbReference>
<dbReference type="InterPro" id="IPR049719">
    <property type="entry name" value="DotZ-like"/>
</dbReference>
<dbReference type="Pfam" id="PF23129">
    <property type="entry name" value="DotZ"/>
    <property type="match status" value="1"/>
</dbReference>
<gene>
    <name evidence="3" type="primary">dotZ</name>
    <name evidence="6" type="ordered locus">lpg1549</name>
</gene>
<keyword id="KW-0002">3D-structure</keyword>
<keyword id="KW-0963">Cytoplasm</keyword>
<keyword id="KW-0653">Protein transport</keyword>
<keyword id="KW-1185">Reference proteome</keyword>
<keyword id="KW-0813">Transport</keyword>
<keyword id="KW-0843">Virulence</keyword>
<reference key="1">
    <citation type="journal article" date="2004" name="Science">
        <title>The genomic sequence of the accidental pathogen Legionella pneumophila.</title>
        <authorList>
            <person name="Chien M."/>
            <person name="Morozova I."/>
            <person name="Shi S."/>
            <person name="Sheng H."/>
            <person name="Chen J."/>
            <person name="Gomez S.M."/>
            <person name="Asamani G."/>
            <person name="Hill K."/>
            <person name="Nuara J."/>
            <person name="Feder M."/>
            <person name="Rineer J."/>
            <person name="Greenberg J.J."/>
            <person name="Steshenko V."/>
            <person name="Park S.H."/>
            <person name="Zhao B."/>
            <person name="Teplitskaya E."/>
            <person name="Edwards J.R."/>
            <person name="Pampou S."/>
            <person name="Georghiou A."/>
            <person name="Chou I.-C."/>
            <person name="Iannuccilli W."/>
            <person name="Ulz M.E."/>
            <person name="Kim D.H."/>
            <person name="Geringer-Sameth A."/>
            <person name="Goldsberry C."/>
            <person name="Morozov P."/>
            <person name="Fischer S.G."/>
            <person name="Segal G."/>
            <person name="Qu X."/>
            <person name="Rzhetsky A."/>
            <person name="Zhang P."/>
            <person name="Cayanis E."/>
            <person name="De Jong P.J."/>
            <person name="Ju J."/>
            <person name="Kalachikov S."/>
            <person name="Shuman H.A."/>
            <person name="Russo J.J."/>
        </authorList>
    </citation>
    <scope>NUCLEOTIDE SEQUENCE [LARGE SCALE GENOMIC DNA]</scope>
    <source>
        <strain>Philadelphia 1 / ATCC 33152 / DSM 7513</strain>
    </source>
</reference>
<reference key="2">
    <citation type="journal article" date="2022" name="Mol. Microbiol.">
        <title>Proteins DotY and DotZ modulate the dynamics and localization of the type IVB coupling complex of Legionella pneumophila.</title>
        <authorList>
            <person name="Mace K."/>
            <person name="Meir A."/>
            <person name="Lukoyanova N."/>
            <person name="Liu L."/>
            <person name="Chetrit D."/>
            <person name="Hospenthal M.K."/>
            <person name="Roy C.R."/>
            <person name="Waksman G."/>
        </authorList>
    </citation>
    <scope>FUNCTION</scope>
    <scope>SUBUNIT</scope>
    <scope>SUBCELLULAR LOCATION</scope>
    <scope>DISRUPTION PHENOTYPE</scope>
    <source>
        <strain>Philadelphia 1 / Lp01</strain>
    </source>
</reference>
<reference evidence="7" key="3">
    <citation type="journal article" date="2020" name="Nat. Commun.">
        <title>Mechanism of effector capture and delivery by the type IV secretion system from Legionella pneumophila.</title>
        <authorList>
            <person name="Meir A."/>
            <person name="Mace K."/>
            <person name="Lukoyanova N."/>
            <person name="Chetrit D."/>
            <person name="Hospenthal M.K."/>
            <person name="Redzej A."/>
            <person name="Roy C."/>
            <person name="Waksman G."/>
        </authorList>
    </citation>
    <scope>STRUCTURE BY ELECTRON MICROSCOPY (3.70 ANGSTROMS)</scope>
    <scope>FUNCTION</scope>
    <scope>SUBUNIT</scope>
    <scope>DISRUPTION PHENOTYPE</scope>
    <scope>MUTAGENESIS OF 283-GLU--ARG-294</scope>
    <source>
        <strain>Philadelphia 1 / Lp01</strain>
    </source>
</reference>